<keyword id="KW-0210">Decarboxylase</keyword>
<keyword id="KW-0456">Lyase</keyword>
<keyword id="KW-0665">Pyrimidine biosynthesis</keyword>
<proteinExistence type="inferred from homology"/>
<protein>
    <recommendedName>
        <fullName evidence="1">Orotidine 5'-phosphate decarboxylase</fullName>
        <ecNumber evidence="1">4.1.1.23</ecNumber>
    </recommendedName>
    <alternativeName>
        <fullName evidence="1">OMP decarboxylase</fullName>
        <shortName evidence="1">OMPDCase</shortName>
        <shortName evidence="1">OMPdecase</shortName>
    </alternativeName>
</protein>
<sequence>MNPLISDFQTPQQRTPVIVALDFANEKDTLGFVRNLDPTLCQIKIGKELFTATGRSLAESLINQGFKLFLDLKYHDIPHTVAQACKVAADMGVWMVDMHASGGRRMMEAAAEAVAGYGTKPLLIGVTVLTSMEQSDLAEIGLNIAPEEQVIRLAKLAQSSGLDGVVCSAQEAAPLRRELGQDFVLVTPGIRLDVAGNNDDQRRIMTPAEALAAGSTYLVMGRPVTQAANPLAVLREVNRVANLEAN</sequence>
<comment type="function">
    <text evidence="1">Catalyzes the decarboxylation of orotidine 5'-monophosphate (OMP) to uridine 5'-monophosphate (UMP).</text>
</comment>
<comment type="catalytic activity">
    <reaction evidence="1">
        <text>orotidine 5'-phosphate + H(+) = UMP + CO2</text>
        <dbReference type="Rhea" id="RHEA:11596"/>
        <dbReference type="ChEBI" id="CHEBI:15378"/>
        <dbReference type="ChEBI" id="CHEBI:16526"/>
        <dbReference type="ChEBI" id="CHEBI:57538"/>
        <dbReference type="ChEBI" id="CHEBI:57865"/>
        <dbReference type="EC" id="4.1.1.23"/>
    </reaction>
</comment>
<comment type="pathway">
    <text evidence="1">Pyrimidine metabolism; UMP biosynthesis via de novo pathway; UMP from orotate: step 2/2.</text>
</comment>
<comment type="subunit">
    <text evidence="1">Homodimer.</text>
</comment>
<comment type="similarity">
    <text evidence="1">Belongs to the OMP decarboxylase family. Type 1 subfamily.</text>
</comment>
<evidence type="ECO:0000255" key="1">
    <source>
        <dbReference type="HAMAP-Rule" id="MF_01200"/>
    </source>
</evidence>
<organism>
    <name type="scientific">Neisseria meningitidis serogroup C (strain 053442)</name>
    <dbReference type="NCBI Taxonomy" id="374833"/>
    <lineage>
        <taxon>Bacteria</taxon>
        <taxon>Pseudomonadati</taxon>
        <taxon>Pseudomonadota</taxon>
        <taxon>Betaproteobacteria</taxon>
        <taxon>Neisseriales</taxon>
        <taxon>Neisseriaceae</taxon>
        <taxon>Neisseria</taxon>
    </lineage>
</organism>
<feature type="chain" id="PRO_1000085493" description="Orotidine 5'-phosphate decarboxylase">
    <location>
        <begin position="1"/>
        <end position="246"/>
    </location>
</feature>
<feature type="active site" description="Proton donor" evidence="1">
    <location>
        <position position="73"/>
    </location>
</feature>
<feature type="binding site" evidence="1">
    <location>
        <position position="22"/>
    </location>
    <ligand>
        <name>substrate</name>
    </ligand>
</feature>
<feature type="binding site" evidence="1">
    <location>
        <position position="44"/>
    </location>
    <ligand>
        <name>substrate</name>
    </ligand>
</feature>
<feature type="binding site" evidence="1">
    <location>
        <begin position="71"/>
        <end position="80"/>
    </location>
    <ligand>
        <name>substrate</name>
    </ligand>
</feature>
<feature type="binding site" evidence="1">
    <location>
        <position position="130"/>
    </location>
    <ligand>
        <name>substrate</name>
    </ligand>
</feature>
<feature type="binding site" evidence="1">
    <location>
        <position position="191"/>
    </location>
    <ligand>
        <name>substrate</name>
    </ligand>
</feature>
<feature type="binding site" evidence="1">
    <location>
        <position position="201"/>
    </location>
    <ligand>
        <name>substrate</name>
    </ligand>
</feature>
<feature type="binding site" evidence="1">
    <location>
        <position position="221"/>
    </location>
    <ligand>
        <name>substrate</name>
    </ligand>
</feature>
<feature type="binding site" evidence="1">
    <location>
        <position position="222"/>
    </location>
    <ligand>
        <name>substrate</name>
    </ligand>
</feature>
<name>PYRF_NEIM0</name>
<dbReference type="EC" id="4.1.1.23" evidence="1"/>
<dbReference type="EMBL" id="CP000381">
    <property type="protein sequence ID" value="ABX72978.1"/>
    <property type="molecule type" value="Genomic_DNA"/>
</dbReference>
<dbReference type="RefSeq" id="WP_012221490.1">
    <property type="nucleotide sequence ID" value="NC_010120.1"/>
</dbReference>
<dbReference type="SMR" id="A9M3Q3"/>
<dbReference type="KEGG" id="nmn:NMCC_0785"/>
<dbReference type="HOGENOM" id="CLU_067069_0_0_4"/>
<dbReference type="UniPathway" id="UPA00070">
    <property type="reaction ID" value="UER00120"/>
</dbReference>
<dbReference type="Proteomes" id="UP000001177">
    <property type="component" value="Chromosome"/>
</dbReference>
<dbReference type="GO" id="GO:0005829">
    <property type="term" value="C:cytosol"/>
    <property type="evidence" value="ECO:0007669"/>
    <property type="project" value="TreeGrafter"/>
</dbReference>
<dbReference type="GO" id="GO:0004590">
    <property type="term" value="F:orotidine-5'-phosphate decarboxylase activity"/>
    <property type="evidence" value="ECO:0007669"/>
    <property type="project" value="UniProtKB-UniRule"/>
</dbReference>
<dbReference type="GO" id="GO:0006207">
    <property type="term" value="P:'de novo' pyrimidine nucleobase biosynthetic process"/>
    <property type="evidence" value="ECO:0007669"/>
    <property type="project" value="InterPro"/>
</dbReference>
<dbReference type="GO" id="GO:0044205">
    <property type="term" value="P:'de novo' UMP biosynthetic process"/>
    <property type="evidence" value="ECO:0007669"/>
    <property type="project" value="UniProtKB-UniRule"/>
</dbReference>
<dbReference type="CDD" id="cd04725">
    <property type="entry name" value="OMP_decarboxylase_like"/>
    <property type="match status" value="1"/>
</dbReference>
<dbReference type="FunFam" id="3.20.20.70:FF:000015">
    <property type="entry name" value="Orotidine 5'-phosphate decarboxylase"/>
    <property type="match status" value="1"/>
</dbReference>
<dbReference type="Gene3D" id="3.20.20.70">
    <property type="entry name" value="Aldolase class I"/>
    <property type="match status" value="1"/>
</dbReference>
<dbReference type="HAMAP" id="MF_01200_B">
    <property type="entry name" value="OMPdecase_type1_B"/>
    <property type="match status" value="1"/>
</dbReference>
<dbReference type="InterPro" id="IPR013785">
    <property type="entry name" value="Aldolase_TIM"/>
</dbReference>
<dbReference type="InterPro" id="IPR014732">
    <property type="entry name" value="OMPdecase"/>
</dbReference>
<dbReference type="InterPro" id="IPR018089">
    <property type="entry name" value="OMPdecase_AS"/>
</dbReference>
<dbReference type="InterPro" id="IPR047596">
    <property type="entry name" value="OMPdecase_bac"/>
</dbReference>
<dbReference type="InterPro" id="IPR001754">
    <property type="entry name" value="OMPdeCOase_dom"/>
</dbReference>
<dbReference type="InterPro" id="IPR011060">
    <property type="entry name" value="RibuloseP-bd_barrel"/>
</dbReference>
<dbReference type="NCBIfam" id="NF001273">
    <property type="entry name" value="PRK00230.1"/>
    <property type="match status" value="1"/>
</dbReference>
<dbReference type="NCBIfam" id="TIGR01740">
    <property type="entry name" value="pyrF"/>
    <property type="match status" value="1"/>
</dbReference>
<dbReference type="PANTHER" id="PTHR32119">
    <property type="entry name" value="OROTIDINE 5'-PHOSPHATE DECARBOXYLASE"/>
    <property type="match status" value="1"/>
</dbReference>
<dbReference type="PANTHER" id="PTHR32119:SF2">
    <property type="entry name" value="OROTIDINE 5'-PHOSPHATE DECARBOXYLASE"/>
    <property type="match status" value="1"/>
</dbReference>
<dbReference type="Pfam" id="PF00215">
    <property type="entry name" value="OMPdecase"/>
    <property type="match status" value="1"/>
</dbReference>
<dbReference type="SMART" id="SM00934">
    <property type="entry name" value="OMPdecase"/>
    <property type="match status" value="1"/>
</dbReference>
<dbReference type="SUPFAM" id="SSF51366">
    <property type="entry name" value="Ribulose-phoshate binding barrel"/>
    <property type="match status" value="1"/>
</dbReference>
<dbReference type="PROSITE" id="PS00156">
    <property type="entry name" value="OMPDECASE"/>
    <property type="match status" value="1"/>
</dbReference>
<gene>
    <name evidence="1" type="primary">pyrF</name>
    <name type="ordered locus">NMCC_0785</name>
</gene>
<accession>A9M3Q3</accession>
<reference key="1">
    <citation type="journal article" date="2008" name="Genomics">
        <title>Characterization of ST-4821 complex, a unique Neisseria meningitidis clone.</title>
        <authorList>
            <person name="Peng J."/>
            <person name="Yang L."/>
            <person name="Yang F."/>
            <person name="Yang J."/>
            <person name="Yan Y."/>
            <person name="Nie H."/>
            <person name="Zhang X."/>
            <person name="Xiong Z."/>
            <person name="Jiang Y."/>
            <person name="Cheng F."/>
            <person name="Xu X."/>
            <person name="Chen S."/>
            <person name="Sun L."/>
            <person name="Li W."/>
            <person name="Shen Y."/>
            <person name="Shao Z."/>
            <person name="Liang X."/>
            <person name="Xu J."/>
            <person name="Jin Q."/>
        </authorList>
    </citation>
    <scope>NUCLEOTIDE SEQUENCE [LARGE SCALE GENOMIC DNA]</scope>
    <source>
        <strain>053442</strain>
    </source>
</reference>